<organism>
    <name type="scientific">Streptococcus uberis (strain ATCC BAA-854 / 0140J)</name>
    <dbReference type="NCBI Taxonomy" id="218495"/>
    <lineage>
        <taxon>Bacteria</taxon>
        <taxon>Bacillati</taxon>
        <taxon>Bacillota</taxon>
        <taxon>Bacilli</taxon>
        <taxon>Lactobacillales</taxon>
        <taxon>Streptococcaceae</taxon>
        <taxon>Streptococcus</taxon>
    </lineage>
</organism>
<dbReference type="EC" id="3.1.21.10" evidence="1"/>
<dbReference type="EMBL" id="AM946015">
    <property type="protein sequence ID" value="CAR43046.1"/>
    <property type="molecule type" value="Genomic_DNA"/>
</dbReference>
<dbReference type="RefSeq" id="WP_015911726.1">
    <property type="nucleotide sequence ID" value="NC_012004.1"/>
</dbReference>
<dbReference type="SMR" id="B9DV63"/>
<dbReference type="STRING" id="218495.SUB1406"/>
<dbReference type="GeneID" id="93826729"/>
<dbReference type="KEGG" id="sub:SUB1406"/>
<dbReference type="eggNOG" id="COG3331">
    <property type="taxonomic scope" value="Bacteria"/>
</dbReference>
<dbReference type="HOGENOM" id="CLU_096340_0_0_9"/>
<dbReference type="OrthoDB" id="9783592at2"/>
<dbReference type="Proteomes" id="UP000000449">
    <property type="component" value="Chromosome"/>
</dbReference>
<dbReference type="GO" id="GO:0005737">
    <property type="term" value="C:cytoplasm"/>
    <property type="evidence" value="ECO:0007669"/>
    <property type="project" value="UniProtKB-SubCell"/>
</dbReference>
<dbReference type="GO" id="GO:0004519">
    <property type="term" value="F:endonuclease activity"/>
    <property type="evidence" value="ECO:0007669"/>
    <property type="project" value="UniProtKB-UniRule"/>
</dbReference>
<dbReference type="GO" id="GO:0000287">
    <property type="term" value="F:magnesium ion binding"/>
    <property type="evidence" value="ECO:0007669"/>
    <property type="project" value="UniProtKB-UniRule"/>
</dbReference>
<dbReference type="GO" id="GO:0003676">
    <property type="term" value="F:nucleic acid binding"/>
    <property type="evidence" value="ECO:0007669"/>
    <property type="project" value="InterPro"/>
</dbReference>
<dbReference type="GO" id="GO:0007059">
    <property type="term" value="P:chromosome segregation"/>
    <property type="evidence" value="ECO:0007669"/>
    <property type="project" value="UniProtKB-UniRule"/>
</dbReference>
<dbReference type="GO" id="GO:0006310">
    <property type="term" value="P:DNA recombination"/>
    <property type="evidence" value="ECO:0007669"/>
    <property type="project" value="UniProtKB-UniRule"/>
</dbReference>
<dbReference type="GO" id="GO:0006281">
    <property type="term" value="P:DNA repair"/>
    <property type="evidence" value="ECO:0007669"/>
    <property type="project" value="UniProtKB-UniRule"/>
</dbReference>
<dbReference type="CDD" id="cd22354">
    <property type="entry name" value="RecU-like"/>
    <property type="match status" value="1"/>
</dbReference>
<dbReference type="Gene3D" id="3.40.1350.10">
    <property type="match status" value="1"/>
</dbReference>
<dbReference type="HAMAP" id="MF_00130">
    <property type="entry name" value="RecU"/>
    <property type="match status" value="1"/>
</dbReference>
<dbReference type="InterPro" id="IPR004612">
    <property type="entry name" value="Resolv_RecU"/>
</dbReference>
<dbReference type="InterPro" id="IPR011335">
    <property type="entry name" value="Restrct_endonuc-II-like"/>
</dbReference>
<dbReference type="InterPro" id="IPR011856">
    <property type="entry name" value="tRNA_endonuc-like_dom_sf"/>
</dbReference>
<dbReference type="NCBIfam" id="NF002580">
    <property type="entry name" value="PRK02234.1-1"/>
    <property type="match status" value="1"/>
</dbReference>
<dbReference type="NCBIfam" id="NF002584">
    <property type="entry name" value="PRK02234.1-5"/>
    <property type="match status" value="1"/>
</dbReference>
<dbReference type="NCBIfam" id="TIGR00648">
    <property type="entry name" value="recU"/>
    <property type="match status" value="1"/>
</dbReference>
<dbReference type="Pfam" id="PF03838">
    <property type="entry name" value="RecU"/>
    <property type="match status" value="1"/>
</dbReference>
<dbReference type="PIRSF" id="PIRSF037785">
    <property type="entry name" value="RecU"/>
    <property type="match status" value="1"/>
</dbReference>
<dbReference type="SUPFAM" id="SSF52980">
    <property type="entry name" value="Restriction endonuclease-like"/>
    <property type="match status" value="1"/>
</dbReference>
<accession>B9DV63</accession>
<evidence type="ECO:0000255" key="1">
    <source>
        <dbReference type="HAMAP-Rule" id="MF_00130"/>
    </source>
</evidence>
<feature type="chain" id="PRO_1000193447" description="Holliday junction resolvase RecU">
    <location>
        <begin position="1"/>
        <end position="202"/>
    </location>
</feature>
<feature type="binding site" evidence="1">
    <location>
        <position position="85"/>
    </location>
    <ligand>
        <name>Mg(2+)</name>
        <dbReference type="ChEBI" id="CHEBI:18420"/>
    </ligand>
</feature>
<feature type="binding site" evidence="1">
    <location>
        <position position="87"/>
    </location>
    <ligand>
        <name>Mg(2+)</name>
        <dbReference type="ChEBI" id="CHEBI:18420"/>
    </ligand>
</feature>
<feature type="binding site" evidence="1">
    <location>
        <position position="100"/>
    </location>
    <ligand>
        <name>Mg(2+)</name>
        <dbReference type="ChEBI" id="CHEBI:18420"/>
    </ligand>
</feature>
<feature type="binding site" evidence="1">
    <location>
        <position position="119"/>
    </location>
    <ligand>
        <name>Mg(2+)</name>
        <dbReference type="ChEBI" id="CHEBI:18420"/>
    </ligand>
</feature>
<feature type="site" description="Transition state stabilizer" evidence="1">
    <location>
        <position position="102"/>
    </location>
</feature>
<sequence>MVNYPHQLKGKKANPTPFKTKKSTVDFANRGMSFEAAINATNDYYLSRGIAVIHKKPTPIQIVKVDYPKRSRAKIVEAYFRQASTTDYSGVYKGLYIDFEAKETRQKTAMPMKNFHLHQIEHMASVLDQKGICFVLLHFSTLKETYYLPAKALIDFFQIDKGNKSMPLDYIKKNGYEIIQGAFPQVPYLDIIEQNFLGGDYN</sequence>
<reference key="1">
    <citation type="journal article" date="2009" name="BMC Genomics">
        <title>Evidence for niche adaptation in the genome of the bovine pathogen Streptococcus uberis.</title>
        <authorList>
            <person name="Ward P.N."/>
            <person name="Holden M.T.G."/>
            <person name="Leigh J.A."/>
            <person name="Lennard N."/>
            <person name="Bignell A."/>
            <person name="Barron A."/>
            <person name="Clark L."/>
            <person name="Quail M.A."/>
            <person name="Woodward J."/>
            <person name="Barrell B.G."/>
            <person name="Egan S.A."/>
            <person name="Field T.R."/>
            <person name="Maskell D."/>
            <person name="Kehoe M."/>
            <person name="Dowson C.G."/>
            <person name="Chanter N."/>
            <person name="Whatmore A.M."/>
            <person name="Bentley S.D."/>
            <person name="Parkhill J."/>
        </authorList>
    </citation>
    <scope>NUCLEOTIDE SEQUENCE [LARGE SCALE GENOMIC DNA]</scope>
    <source>
        <strain>ATCC BAA-854 / 0140J</strain>
    </source>
</reference>
<gene>
    <name evidence="1" type="primary">recU</name>
    <name type="ordered locus">SUB1406</name>
</gene>
<proteinExistence type="inferred from homology"/>
<keyword id="KW-0963">Cytoplasm</keyword>
<keyword id="KW-0227">DNA damage</keyword>
<keyword id="KW-0233">DNA recombination</keyword>
<keyword id="KW-0234">DNA repair</keyword>
<keyword id="KW-0255">Endonuclease</keyword>
<keyword id="KW-0378">Hydrolase</keyword>
<keyword id="KW-0460">Magnesium</keyword>
<keyword id="KW-0479">Metal-binding</keyword>
<keyword id="KW-0540">Nuclease</keyword>
<keyword id="KW-1185">Reference proteome</keyword>
<name>RECU_STRU0</name>
<protein>
    <recommendedName>
        <fullName evidence="1">Holliday junction resolvase RecU</fullName>
        <ecNumber evidence="1">3.1.21.10</ecNumber>
    </recommendedName>
    <alternativeName>
        <fullName evidence="1">Recombination protein U homolog</fullName>
    </alternativeName>
</protein>
<comment type="function">
    <text evidence="1">Endonuclease that resolves Holliday junction intermediates in genetic recombination. Cleaves mobile four-strand junctions by introducing symmetrical nicks in paired strands. Promotes annealing of linear ssDNA with homologous dsDNA. Required for DNA repair, homologous recombination and chromosome segregation.</text>
</comment>
<comment type="catalytic activity">
    <reaction evidence="1">
        <text>Endonucleolytic cleavage at a junction such as a reciprocal single-stranded crossover between two homologous DNA duplexes (Holliday junction).</text>
        <dbReference type="EC" id="3.1.21.10"/>
    </reaction>
</comment>
<comment type="cofactor">
    <cofactor evidence="1">
        <name>Mg(2+)</name>
        <dbReference type="ChEBI" id="CHEBI:18420"/>
    </cofactor>
    <text evidence="1">Binds 1 Mg(2+) ion per subunit.</text>
</comment>
<comment type="subcellular location">
    <subcellularLocation>
        <location evidence="1">Cytoplasm</location>
    </subcellularLocation>
</comment>
<comment type="similarity">
    <text evidence="1">Belongs to the RecU family.</text>
</comment>